<dbReference type="EC" id="2.1.1.245" evidence="1"/>
<dbReference type="EMBL" id="AE008384">
    <property type="protein sequence ID" value="AAM30385.1"/>
    <property type="molecule type" value="Genomic_DNA"/>
</dbReference>
<dbReference type="SMR" id="Q8PZ09"/>
<dbReference type="KEGG" id="mma:MM_0689"/>
<dbReference type="PATRIC" id="fig|192952.21.peg.820"/>
<dbReference type="eggNOG" id="arCOG01979">
    <property type="taxonomic scope" value="Archaea"/>
</dbReference>
<dbReference type="HOGENOM" id="CLU_050002_0_0_2"/>
<dbReference type="UniPathway" id="UPA00642"/>
<dbReference type="Proteomes" id="UP000000595">
    <property type="component" value="Chromosome"/>
</dbReference>
<dbReference type="GO" id="GO:0051539">
    <property type="term" value="F:4 iron, 4 sulfur cluster binding"/>
    <property type="evidence" value="ECO:0007669"/>
    <property type="project" value="UniProtKB-KW"/>
</dbReference>
<dbReference type="GO" id="GO:0005506">
    <property type="term" value="F:iron ion binding"/>
    <property type="evidence" value="ECO:0007669"/>
    <property type="project" value="UniProtKB-UniRule"/>
</dbReference>
<dbReference type="GO" id="GO:0008168">
    <property type="term" value="F:methyltransferase activity"/>
    <property type="evidence" value="ECO:0007669"/>
    <property type="project" value="UniProtKB-UniRule"/>
</dbReference>
<dbReference type="GO" id="GO:0046356">
    <property type="term" value="P:acetyl-CoA catabolic process"/>
    <property type="evidence" value="ECO:0007669"/>
    <property type="project" value="InterPro"/>
</dbReference>
<dbReference type="GO" id="GO:0019385">
    <property type="term" value="P:methanogenesis, from acetate"/>
    <property type="evidence" value="ECO:0007669"/>
    <property type="project" value="UniProtKB-UniRule"/>
</dbReference>
<dbReference type="GO" id="GO:0032259">
    <property type="term" value="P:methylation"/>
    <property type="evidence" value="ECO:0007669"/>
    <property type="project" value="UniProtKB-KW"/>
</dbReference>
<dbReference type="Gene3D" id="3.40.50.11600">
    <property type="match status" value="1"/>
</dbReference>
<dbReference type="Gene3D" id="3.20.20.20">
    <property type="entry name" value="Dihydropteroate synthase-like"/>
    <property type="match status" value="1"/>
</dbReference>
<dbReference type="HAMAP" id="MF_01136">
    <property type="entry name" value="CdhE"/>
    <property type="match status" value="1"/>
</dbReference>
<dbReference type="InterPro" id="IPR007202">
    <property type="entry name" value="4Fe-4S_dom"/>
</dbReference>
<dbReference type="InterPro" id="IPR016041">
    <property type="entry name" value="Ac-CoA_synth_d_su_TIM-brl"/>
</dbReference>
<dbReference type="InterPro" id="IPR051069">
    <property type="entry name" value="ACDS_complex_subunit"/>
</dbReference>
<dbReference type="InterPro" id="IPR016218">
    <property type="entry name" value="AcylCoA_decarb/synth_gsu"/>
</dbReference>
<dbReference type="InterPro" id="IPR023427">
    <property type="entry name" value="AcylCoA_decarb/synth_gsu_arc"/>
</dbReference>
<dbReference type="InterPro" id="IPR011005">
    <property type="entry name" value="Dihydropteroate_synth-like_sf"/>
</dbReference>
<dbReference type="NCBIfam" id="NF003195">
    <property type="entry name" value="PRK04165.1"/>
    <property type="match status" value="1"/>
</dbReference>
<dbReference type="PANTHER" id="PTHR36214">
    <property type="match status" value="1"/>
</dbReference>
<dbReference type="PANTHER" id="PTHR36214:SF3">
    <property type="entry name" value="ACETYL-COA DECARBONYLASE_SYNTHASE COMPLEX SUBUNIT GAMMA"/>
    <property type="match status" value="1"/>
</dbReference>
<dbReference type="Pfam" id="PF03599">
    <property type="entry name" value="CdhD"/>
    <property type="match status" value="1"/>
</dbReference>
<dbReference type="Pfam" id="PF04060">
    <property type="entry name" value="FeS"/>
    <property type="match status" value="1"/>
</dbReference>
<dbReference type="PIRSF" id="PIRSF000376">
    <property type="entry name" value="AcCoA_decarb_gamma"/>
    <property type="match status" value="1"/>
</dbReference>
<dbReference type="SUPFAM" id="SSF51717">
    <property type="entry name" value="Dihydropteroate synthetase-like"/>
    <property type="match status" value="1"/>
</dbReference>
<dbReference type="PROSITE" id="PS51656">
    <property type="entry name" value="4FE4S"/>
    <property type="match status" value="1"/>
</dbReference>
<feature type="chain" id="PRO_0000155122" description="Acetyl-CoA decarbonylase/synthase complex subunit gamma 1">
    <location>
        <begin position="1"/>
        <end position="470"/>
    </location>
</feature>
<feature type="domain" description="4Fe-4S" evidence="2">
    <location>
        <begin position="1"/>
        <end position="60"/>
    </location>
</feature>
<feature type="binding site" evidence="1">
    <location>
        <position position="18"/>
    </location>
    <ligand>
        <name>[4Fe-4S] cluster</name>
        <dbReference type="ChEBI" id="CHEBI:49883"/>
    </ligand>
</feature>
<feature type="binding site" evidence="1">
    <location>
        <position position="21"/>
    </location>
    <ligand>
        <name>[4Fe-4S] cluster</name>
        <dbReference type="ChEBI" id="CHEBI:49883"/>
    </ligand>
</feature>
<feature type="binding site" evidence="1">
    <location>
        <position position="26"/>
    </location>
    <ligand>
        <name>[4Fe-4S] cluster</name>
        <dbReference type="ChEBI" id="CHEBI:49883"/>
    </ligand>
</feature>
<feature type="binding site" evidence="1">
    <location>
        <position position="43"/>
    </location>
    <ligand>
        <name>[4Fe-4S] cluster</name>
        <dbReference type="ChEBI" id="CHEBI:49883"/>
    </ligand>
</feature>
<reference key="1">
    <citation type="journal article" date="2002" name="J. Mol. Microbiol. Biotechnol.">
        <title>The genome of Methanosarcina mazei: evidence for lateral gene transfer between Bacteria and Archaea.</title>
        <authorList>
            <person name="Deppenmeier U."/>
            <person name="Johann A."/>
            <person name="Hartsch T."/>
            <person name="Merkl R."/>
            <person name="Schmitz R.A."/>
            <person name="Martinez-Arias R."/>
            <person name="Henne A."/>
            <person name="Wiezer A."/>
            <person name="Baeumer S."/>
            <person name="Jacobi C."/>
            <person name="Brueggemann H."/>
            <person name="Lienard T."/>
            <person name="Christmann A."/>
            <person name="Boemecke M."/>
            <person name="Steckel S."/>
            <person name="Bhattacharyya A."/>
            <person name="Lykidis A."/>
            <person name="Overbeek R."/>
            <person name="Klenk H.-P."/>
            <person name="Gunsalus R.P."/>
            <person name="Fritz H.-J."/>
            <person name="Gottschalk G."/>
        </authorList>
    </citation>
    <scope>NUCLEOTIDE SEQUENCE [LARGE SCALE GENOMIC DNA]</scope>
    <source>
        <strain>ATCC BAA-159 / DSM 3647 / Goe1 / Go1 / JCM 11833 / OCM 88</strain>
    </source>
</reference>
<organism>
    <name type="scientific">Methanosarcina mazei (strain ATCC BAA-159 / DSM 3647 / Goe1 / Go1 / JCM 11833 / OCM 88)</name>
    <name type="common">Methanosarcina frisia</name>
    <dbReference type="NCBI Taxonomy" id="192952"/>
    <lineage>
        <taxon>Archaea</taxon>
        <taxon>Methanobacteriati</taxon>
        <taxon>Methanobacteriota</taxon>
        <taxon>Stenosarchaea group</taxon>
        <taxon>Methanomicrobia</taxon>
        <taxon>Methanosarcinales</taxon>
        <taxon>Methanosarcinaceae</taxon>
        <taxon>Methanosarcina</taxon>
    </lineage>
</organism>
<name>ACDG1_METMA</name>
<gene>
    <name evidence="1" type="primary">cdhE1</name>
    <name type="ordered locus">MM_0689</name>
</gene>
<protein>
    <recommendedName>
        <fullName evidence="1">Acetyl-CoA decarbonylase/synthase complex subunit gamma 1</fullName>
        <shortName evidence="1">ACDS complex subunit gamma 1</shortName>
        <ecNumber evidence="1">2.1.1.245</ecNumber>
    </recommendedName>
    <alternativeName>
        <fullName evidence="1">5-methyltetrahydrosarcinapterin:corrinoid/iron-sulfur protein Co-methyltransferase 1</fullName>
    </alternativeName>
    <alternativeName>
        <fullName evidence="1">ACDS complex methyltransferase 1</fullName>
    </alternativeName>
    <alternativeName>
        <fullName evidence="1">Corrinoid/iron-sulfur component large subunit 1</fullName>
    </alternativeName>
</protein>
<accession>Q8PZ09</accession>
<comment type="function">
    <text evidence="1">Part of a complex that catalyzes the reversible cleavage of acetyl-CoA, allowing growth on acetate as sole source of carbon and energy.</text>
</comment>
<comment type="catalytic activity">
    <reaction evidence="1">
        <text>5,6,7,8-tetrahydrosarcinapterin + methyl-Co(III)-[corrinoid Fe-S protein] = 5-methyltetrahydrosarcinapterin + Co(I)-[corrinoid Fe-S protein] + H(+)</text>
        <dbReference type="Rhea" id="RHEA:45196"/>
        <dbReference type="Rhea" id="RHEA-COMP:11110"/>
        <dbReference type="Rhea" id="RHEA-COMP:11111"/>
        <dbReference type="ChEBI" id="CHEBI:15378"/>
        <dbReference type="ChEBI" id="CHEBI:59924"/>
        <dbReference type="ChEBI" id="CHEBI:64267"/>
        <dbReference type="ChEBI" id="CHEBI:85033"/>
        <dbReference type="ChEBI" id="CHEBI:85035"/>
        <dbReference type="EC" id="2.1.1.245"/>
    </reaction>
</comment>
<comment type="cofactor">
    <cofactor evidence="1">
        <name>corrinoid</name>
        <dbReference type="ChEBI" id="CHEBI:33913"/>
    </cofactor>
</comment>
<comment type="cofactor">
    <cofactor evidence="1">
        <name>[4Fe-4S] cluster</name>
        <dbReference type="ChEBI" id="CHEBI:49883"/>
    </cofactor>
    <text evidence="1">Binds 1 [4Fe-4S] cluster.</text>
</comment>
<comment type="pathway">
    <text evidence="1">One-carbon metabolism; methanogenesis from acetate.</text>
</comment>
<comment type="subunit">
    <text evidence="1">Heterodimer of delta and gamma chains. The ACDS complex is made up of alpha, epsilon, beta, gamma and delta chains with a probable stoichiometry of (alpha(2)epsilon(2))(4)-beta(8)-(gamma(1)delta(1))(8).</text>
</comment>
<evidence type="ECO:0000255" key="1">
    <source>
        <dbReference type="HAMAP-Rule" id="MF_01136"/>
    </source>
</evidence>
<evidence type="ECO:0000255" key="2">
    <source>
        <dbReference type="PROSITE-ProRule" id="PRU00989"/>
    </source>
</evidence>
<sequence length="470" mass="51332">MKINSPLEAYKYLPQTNCGECGQPTCMAFASTLIDRSGKTTDCPPLIKEKKFAKKLAELDRLLAPEIRQVTIGVGERAANIGGDDVLYRHKLTFFNKTKMFFDVADNMDEAAIVERVKKISDYKKFYVGRNLLLDGVAIRAASNDPAKFATAVKKVIENTELPVILCSFNPAVLKAGLEVAKGKNPLLYAANKDNWKEVGELALEYNVPVVVSAFNDLDGLKTLAKTFAEAGIKDIVLDPGTYPTGKGLKDTFTNFLKIRRAGIMGDTEIAYPIMAMPLTAWMAGIADPVSASYWETVLASIFTIRYGDIMLLHSMEPYATMPEVHLAETIYTDPRSPVAVDSKMYKVGNPTADSPVLFTTNFALTYYTVESDLASNGIDCWLLAVNTDGIGVEAAAAGGQLTADKVKDAFEKSGFDLKSDVTHNSVVIPGLAARLQGDIEDKLNVKVMVGPMDSGRLPGWMEKNWPPKK</sequence>
<proteinExistence type="inferred from homology"/>
<keyword id="KW-0004">4Fe-4S</keyword>
<keyword id="KW-0170">Cobalt</keyword>
<keyword id="KW-0408">Iron</keyword>
<keyword id="KW-0411">Iron-sulfur</keyword>
<keyword id="KW-0479">Metal-binding</keyword>
<keyword id="KW-0484">Methanogenesis</keyword>
<keyword id="KW-0489">Methyltransferase</keyword>
<keyword id="KW-0808">Transferase</keyword>